<keyword id="KW-1185">Reference proteome</keyword>
<proteinExistence type="inferred from homology"/>
<name>Y1541_LACDA</name>
<sequence>MVNIYDTANQLANDLRETQQFLALKEAMDAVKADEGSLALFKELDAAQMEIMEAQQTGKELTEEQQDHFKSLNERVSQNTTLQSMLLAEQAVYTLLNDVQKNIGQPLSEAYEDLRKA</sequence>
<accession>Q1G986</accession>
<comment type="similarity">
    <text evidence="1">Belongs to the UPF0342 family.</text>
</comment>
<reference key="1">
    <citation type="journal article" date="2006" name="Proc. Natl. Acad. Sci. U.S.A.">
        <title>The complete genome sequence of Lactobacillus bulgaricus reveals extensive and ongoing reductive evolution.</title>
        <authorList>
            <person name="van de Guchte M."/>
            <person name="Penaud S."/>
            <person name="Grimaldi C."/>
            <person name="Barbe V."/>
            <person name="Bryson K."/>
            <person name="Nicolas P."/>
            <person name="Robert C."/>
            <person name="Oztas S."/>
            <person name="Mangenot S."/>
            <person name="Couloux A."/>
            <person name="Loux V."/>
            <person name="Dervyn R."/>
            <person name="Bossy R."/>
            <person name="Bolotin A."/>
            <person name="Batto J.-M."/>
            <person name="Walunas T."/>
            <person name="Gibrat J.-F."/>
            <person name="Bessieres P."/>
            <person name="Weissenbach J."/>
            <person name="Ehrlich S.D."/>
            <person name="Maguin E."/>
        </authorList>
    </citation>
    <scope>NUCLEOTIDE SEQUENCE [LARGE SCALE GENOMIC DNA]</scope>
    <source>
        <strain>ATCC 11842 / DSM 20081 / BCRC 10696 / JCM 1002 / NBRC 13953 / NCIMB 11778 / NCTC 12712 / WDCM 00102 / Lb 14</strain>
    </source>
</reference>
<gene>
    <name type="ordered locus">Ldb1541</name>
</gene>
<feature type="chain" id="PRO_0000292732" description="UPF0342 protein Ldb1541">
    <location>
        <begin position="1"/>
        <end position="117"/>
    </location>
</feature>
<protein>
    <recommendedName>
        <fullName evidence="1">UPF0342 protein Ldb1541</fullName>
    </recommendedName>
</protein>
<dbReference type="EMBL" id="CR954253">
    <property type="protein sequence ID" value="CAI98341.1"/>
    <property type="molecule type" value="Genomic_DNA"/>
</dbReference>
<dbReference type="RefSeq" id="WP_003623147.1">
    <property type="nucleotide sequence ID" value="NZ_JQAV01000018.1"/>
</dbReference>
<dbReference type="SMR" id="Q1G986"/>
<dbReference type="STRING" id="390333.Ldb1541"/>
<dbReference type="KEGG" id="ldb:Ldb1541"/>
<dbReference type="PATRIC" id="fig|390333.13.peg.860"/>
<dbReference type="eggNOG" id="COG3679">
    <property type="taxonomic scope" value="Bacteria"/>
</dbReference>
<dbReference type="HOGENOM" id="CLU_140243_3_1_9"/>
<dbReference type="BioCyc" id="LDEL390333:LDB_RS06650-MONOMER"/>
<dbReference type="Proteomes" id="UP000001259">
    <property type="component" value="Chromosome"/>
</dbReference>
<dbReference type="Gene3D" id="1.20.1500.10">
    <property type="entry name" value="YheA/YmcA-like"/>
    <property type="match status" value="1"/>
</dbReference>
<dbReference type="HAMAP" id="MF_01526">
    <property type="entry name" value="UPF0342"/>
    <property type="match status" value="1"/>
</dbReference>
<dbReference type="InterPro" id="IPR010368">
    <property type="entry name" value="Com_YlbF"/>
</dbReference>
<dbReference type="InterPro" id="IPR023378">
    <property type="entry name" value="YheA/YmcA-like_dom_sf"/>
</dbReference>
<dbReference type="Pfam" id="PF06133">
    <property type="entry name" value="Com_YlbF"/>
    <property type="match status" value="1"/>
</dbReference>
<dbReference type="SUPFAM" id="SSF158622">
    <property type="entry name" value="YheA/YmcA-like"/>
    <property type="match status" value="1"/>
</dbReference>
<organism>
    <name type="scientific">Lactobacillus delbrueckii subsp. bulgaricus (strain ATCC 11842 / DSM 20081 / BCRC 10696 / JCM 1002 / NBRC 13953 / NCIMB 11778 / NCTC 12712 / WDCM 00102 / Lb 14)</name>
    <dbReference type="NCBI Taxonomy" id="390333"/>
    <lineage>
        <taxon>Bacteria</taxon>
        <taxon>Bacillati</taxon>
        <taxon>Bacillota</taxon>
        <taxon>Bacilli</taxon>
        <taxon>Lactobacillales</taxon>
        <taxon>Lactobacillaceae</taxon>
        <taxon>Lactobacillus</taxon>
    </lineage>
</organism>
<evidence type="ECO:0000255" key="1">
    <source>
        <dbReference type="HAMAP-Rule" id="MF_01526"/>
    </source>
</evidence>